<feature type="signal peptide" evidence="3">
    <location>
        <begin position="1"/>
        <end position="16"/>
    </location>
</feature>
<feature type="chain" id="PRO_0000373362" description="CD2 homolog" evidence="3">
    <location>
        <begin position="17"/>
        <end position="375"/>
    </location>
</feature>
<feature type="topological domain" description="Extracellular" evidence="3">
    <location>
        <begin position="17"/>
        <end position="207"/>
    </location>
</feature>
<feature type="transmembrane region" description="Helical" evidence="3">
    <location>
        <begin position="208"/>
        <end position="228"/>
    </location>
</feature>
<feature type="topological domain" description="Cytoplasmic" evidence="3">
    <location>
        <begin position="229"/>
        <end position="375"/>
    </location>
</feature>
<feature type="repeat" description="1">
    <location>
        <begin position="305"/>
        <end position="310"/>
    </location>
</feature>
<feature type="repeat" description="2">
    <location>
        <begin position="311"/>
        <end position="316"/>
    </location>
</feature>
<feature type="repeat" description="3">
    <location>
        <begin position="317"/>
        <end position="322"/>
    </location>
</feature>
<feature type="repeat" description="4">
    <location>
        <begin position="323"/>
        <end position="328"/>
    </location>
</feature>
<feature type="repeat" description="5">
    <location>
        <begin position="329"/>
        <end position="334"/>
    </location>
</feature>
<feature type="region of interest" description="Disordered" evidence="4">
    <location>
        <begin position="242"/>
        <end position="278"/>
    </location>
</feature>
<feature type="region of interest" description="5 X 6 AA tandem repeats of K-[LP]-C-[PRS]-[PS]-[PS]">
    <location>
        <begin position="305"/>
        <end position="334"/>
    </location>
</feature>
<feature type="region of interest" description="Disordered" evidence="4">
    <location>
        <begin position="323"/>
        <end position="350"/>
    </location>
</feature>
<feature type="compositionally biased region" description="Basic and acidic residues" evidence="4">
    <location>
        <begin position="256"/>
        <end position="270"/>
    </location>
</feature>
<feature type="compositionally biased region" description="Low complexity" evidence="4">
    <location>
        <begin position="332"/>
        <end position="346"/>
    </location>
</feature>
<feature type="glycosylation site" description="N-linked (GlcNAc...) asparagine; by host" evidence="3">
    <location>
        <position position="24"/>
    </location>
</feature>
<feature type="glycosylation site" description="N-linked (GlcNAc...) asparagine; by host" evidence="3">
    <location>
        <position position="80"/>
    </location>
</feature>
<feature type="glycosylation site" description="N-linked (GlcNAc...) asparagine; by host" evidence="3">
    <location>
        <position position="105"/>
    </location>
</feature>
<feature type="glycosylation site" description="N-linked (GlcNAc...) asparagine; by host" evidence="3">
    <location>
        <position position="122"/>
    </location>
</feature>
<feature type="glycosylation site" description="N-linked (GlcNAc...) asparagine; by host" evidence="3">
    <location>
        <position position="134"/>
    </location>
</feature>
<feature type="glycosylation site" description="N-linked (GlcNAc...) asparagine; by host" evidence="3">
    <location>
        <position position="145"/>
    </location>
</feature>
<feature type="glycosylation site" description="N-linked (GlcNAc...) asparagine; by host" evidence="3">
    <location>
        <position position="168"/>
    </location>
</feature>
<feature type="glycosylation site" description="N-linked (GlcNAc...) asparagine; by host" evidence="3">
    <location>
        <position position="176"/>
    </location>
</feature>
<feature type="glycosylation site" description="N-linked (GlcNAc...) asparagine; by host" evidence="3">
    <location>
        <position position="183"/>
    </location>
</feature>
<feature type="disulfide bond" evidence="1">
    <location>
        <begin position="123"/>
        <end position="190"/>
    </location>
</feature>
<feature type="disulfide bond" evidence="1">
    <location>
        <begin position="130"/>
        <end position="173"/>
    </location>
</feature>
<evidence type="ECO:0000250" key="1">
    <source>
        <dbReference type="UniProtKB" id="P06729"/>
    </source>
</evidence>
<evidence type="ECO:0000250" key="2">
    <source>
        <dbReference type="UniProtKB" id="Q89501"/>
    </source>
</evidence>
<evidence type="ECO:0000255" key="3"/>
<evidence type="ECO:0000256" key="4">
    <source>
        <dbReference type="SAM" id="MobiDB-lite"/>
    </source>
</evidence>
<evidence type="ECO:0000269" key="5">
    <source>
    </source>
</evidence>
<evidence type="ECO:0000269" key="6">
    <source>
    </source>
</evidence>
<evidence type="ECO:0000305" key="7"/>
<proteinExistence type="evidence at protein level"/>
<protein>
    <recommendedName>
        <fullName>CD2 homolog</fullName>
        <shortName>CD2H</shortName>
    </recommendedName>
    <alternativeName>
        <fullName>5HL</fullName>
    </alternativeName>
    <alternativeName>
        <fullName>CD2v</fullName>
    </alternativeName>
    <alternativeName>
        <fullName>T-lymphocyte CD2 receptor-like protein</fullName>
        <shortName>CD2-like protein</shortName>
    </alternativeName>
    <alternativeName>
        <fullName evidence="2">pEP402R</fullName>
    </alternativeName>
</protein>
<organismHost>
    <name type="scientific">Ornithodoros</name>
    <name type="common">relapsing fever ticks</name>
    <dbReference type="NCBI Taxonomy" id="6937"/>
</organismHost>
<organismHost>
    <name type="scientific">Phacochoerus aethiopicus</name>
    <name type="common">Warthog</name>
    <dbReference type="NCBI Taxonomy" id="85517"/>
</organismHost>
<organismHost>
    <name type="scientific">Phacochoerus africanus</name>
    <name type="common">Warthog</name>
    <dbReference type="NCBI Taxonomy" id="41426"/>
</organismHost>
<organismHost>
    <name type="scientific">Potamochoerus larvatus</name>
    <name type="common">Bushpig</name>
    <dbReference type="NCBI Taxonomy" id="273792"/>
</organismHost>
<organismHost>
    <name type="scientific">Sus scrofa</name>
    <name type="common">Pig</name>
    <dbReference type="NCBI Taxonomy" id="9823"/>
</organismHost>
<name>CD2H_ASFM2</name>
<dbReference type="EMBL" id="AY261361">
    <property type="status" value="NOT_ANNOTATED_CDS"/>
    <property type="molecule type" value="Genomic_DNA"/>
</dbReference>
<dbReference type="Proteomes" id="UP000000860">
    <property type="component" value="Segment"/>
</dbReference>
<dbReference type="GO" id="GO:0044177">
    <property type="term" value="C:host cell Golgi apparatus"/>
    <property type="evidence" value="ECO:0007669"/>
    <property type="project" value="UniProtKB-SubCell"/>
</dbReference>
<dbReference type="GO" id="GO:0033644">
    <property type="term" value="C:host cell membrane"/>
    <property type="evidence" value="ECO:0007669"/>
    <property type="project" value="UniProtKB-SubCell"/>
</dbReference>
<dbReference type="GO" id="GO:0016020">
    <property type="term" value="C:membrane"/>
    <property type="evidence" value="ECO:0007669"/>
    <property type="project" value="UniProtKB-KW"/>
</dbReference>
<dbReference type="GO" id="GO:0055036">
    <property type="term" value="C:virion membrane"/>
    <property type="evidence" value="ECO:0007669"/>
    <property type="project" value="UniProtKB-SubCell"/>
</dbReference>
<dbReference type="Gene3D" id="2.60.40.10">
    <property type="entry name" value="Immunoglobulins"/>
    <property type="match status" value="1"/>
</dbReference>
<dbReference type="InterPro" id="IPR036179">
    <property type="entry name" value="Ig-like_dom_sf"/>
</dbReference>
<dbReference type="InterPro" id="IPR013783">
    <property type="entry name" value="Ig-like_fold"/>
</dbReference>
<dbReference type="SUPFAM" id="SSF48726">
    <property type="entry name" value="Immunoglobulin"/>
    <property type="match status" value="1"/>
</dbReference>
<sequence length="375" mass="42396">MIIILIFLIIPNIVLSIDYWVSFNKTIILDSNITNDNNDINGVSWNFLNNSLNTLATCGKAGNFCECSNYSTSLYNIAHNCSLTIFPHNDVFGTPYQVVWNQIINYTIKLLTPVTPPNITYNCTNFLITCKKNNGTNTIIYFNINDTNVKYTNESILEYNWNNSNFNNFTATCIINNTINSSNDTQTIDCINTLLSSYLDFFQVASYMFYMIIFIATGIIASIFISIITFLSLRKRKKHVEEIESPSPSESNEEEQCQHDDTTSIHEPSPREPLLPKPYSRYQYNTPIYYMRPLTQPLNPSPLPKLCPPPKPCPPPKPCPPPKPCPPPKPCPSSESCSPPESYSLPKPLPNIPLLPNIPPLSTQNISLIHVDRII</sequence>
<keyword id="KW-1015">Disulfide bond</keyword>
<keyword id="KW-0325">Glycoprotein</keyword>
<keyword id="KW-1040">Host Golgi apparatus</keyword>
<keyword id="KW-1043">Host membrane</keyword>
<keyword id="KW-0426">Late protein</keyword>
<keyword id="KW-0472">Membrane</keyword>
<keyword id="KW-0675">Receptor</keyword>
<keyword id="KW-0677">Repeat</keyword>
<keyword id="KW-0732">Signal</keyword>
<keyword id="KW-0812">Transmembrane</keyword>
<keyword id="KW-1133">Transmembrane helix</keyword>
<keyword id="KW-0946">Virion</keyword>
<gene>
    <name type="ordered locus">Mal-066</name>
</gene>
<comment type="function">
    <text evidence="2 6">May play an immunosuppressive role by inhibiting lymphocyte proliferation and subsequently facilitating viral replication and generalization of infection (PubMed:9525608). Responsible for viral hemadsorption, which may help viral spread (By similarity). Increases virus replication in the tick vector at the step of virus uptake or replication in the tick gut (By similarity). May play a role in the host Golgi reorganization to yield viral factories (By similarity). May play a role in host cell penetration (By similarity).</text>
</comment>
<comment type="subunit">
    <text evidence="2">Both glycosylated and nonglycosylated forms interact (via C-terminus) with the host AP-1 complex.</text>
</comment>
<comment type="subcellular location">
    <subcellularLocation>
        <location evidence="5">Host membrane</location>
        <topology evidence="7">Single-pass type I membrane protein</topology>
    </subcellularLocation>
    <subcellularLocation>
        <location evidence="2">Virion membrane</location>
    </subcellularLocation>
    <subcellularLocation>
        <location evidence="2">Host Golgi apparatus</location>
    </subcellularLocation>
    <text evidence="2 5">Localizes around the cytoplasmic viral factories which are probably derived from the host Golgi membrane (By similarity). Both proteolytic fragments localize to membrane compartements (PubMed:21248037). A minor fraction localizes on the host plasma membrane and on the outer viral envelope of budding particles (By similarity).</text>
</comment>
<comment type="induction">
    <text evidence="7">Expressed in the late phase of the viral replicative cycle.</text>
</comment>
<comment type="domain">
    <text evidence="2">The C-terminus contains repetitive amino-acids that may function as a cell-penetrating peptide.</text>
</comment>
<comment type="PTM">
    <text evidence="5">Cleaved into two fragments of 63 kDa and 26 kDa containing respectively the glycosylated N-terminus and the nonglycosylated C-terminus (PubMed:21248037). A full-length 89-kDa glycosylated form also exists (PubMed:21248037).</text>
</comment>
<comment type="similarity">
    <text evidence="7">Belongs to the asfivirus CD2 homolog protein family.</text>
</comment>
<accession>P0C9V9</accession>
<organism>
    <name type="scientific">African swine fever virus (isolate Tick/Malawi/Lil 20-1/1983)</name>
    <name type="common">ASFV</name>
    <dbReference type="NCBI Taxonomy" id="10500"/>
    <lineage>
        <taxon>Viruses</taxon>
        <taxon>Varidnaviria</taxon>
        <taxon>Bamfordvirae</taxon>
        <taxon>Nucleocytoviricota</taxon>
        <taxon>Pokkesviricetes</taxon>
        <taxon>Asfuvirales</taxon>
        <taxon>Asfarviridae</taxon>
        <taxon>Asfivirus</taxon>
        <taxon>African swine fever virus</taxon>
    </lineage>
</organism>
<reference key="1">
    <citation type="submission" date="2003-03" db="EMBL/GenBank/DDBJ databases">
        <title>African swine fever virus genomes.</title>
        <authorList>
            <person name="Kutish G.F."/>
            <person name="Rock D.L."/>
        </authorList>
    </citation>
    <scope>NUCLEOTIDE SEQUENCE [LARGE SCALE GENOMIC DNA]</scope>
</reference>
<reference key="2">
    <citation type="journal article" date="1998" name="J. Virol.">
        <title>Deletion of a CD2-like gene, 8-DR, from African swine fever virus affects viral infection in domestic swine.</title>
        <authorList>
            <person name="Borca M.V."/>
            <person name="Carrillo C."/>
            <person name="Zsak L."/>
            <person name="Laegreid W.W."/>
            <person name="Kutish G.F."/>
            <person name="Neilan J.G."/>
            <person name="Burrage T.G."/>
            <person name="Rock D.L."/>
        </authorList>
    </citation>
    <scope>FUNCTION</scope>
</reference>
<reference key="3">
    <citation type="journal article" date="2011" name="J. Virol.">
        <title>Processing and localization of the african swine fever virus CD2v transmembrane protein.</title>
        <authorList>
            <person name="Goatley L.C."/>
            <person name="Dixon L.K."/>
        </authorList>
    </citation>
    <scope>SUBCELLULAR LOCATION</scope>
    <scope>PROTEOLYTIC CLEAVAGE</scope>
    <scope>GLYCOSYLATION</scope>
</reference>